<organism>
    <name type="scientific">Aspergillus fumigatus (strain CBS 144.89 / FGSC A1163 / CEA10)</name>
    <name type="common">Neosartorya fumigata</name>
    <dbReference type="NCBI Taxonomy" id="451804"/>
    <lineage>
        <taxon>Eukaryota</taxon>
        <taxon>Fungi</taxon>
        <taxon>Dikarya</taxon>
        <taxon>Ascomycota</taxon>
        <taxon>Pezizomycotina</taxon>
        <taxon>Eurotiomycetes</taxon>
        <taxon>Eurotiomycetidae</taxon>
        <taxon>Eurotiales</taxon>
        <taxon>Aspergillaceae</taxon>
        <taxon>Aspergillus</taxon>
        <taxon>Aspergillus subgen. Fumigati</taxon>
    </lineage>
</organism>
<name>CBHB_ASPFC</name>
<comment type="function">
    <text evidence="1">The biological conversion of cellulose to glucose generally requires three types of hydrolytic enzymes: (1) Endoglucanases which cut internal beta-1,4-glucosidic bonds; (2) Exocellobiohydrolases that cut the disaccharide cellobiose from the non-reducing end of the cellulose polymer chain; (3) Beta-1,4-glucosidases which hydrolyze the cellobiose and other short cello-oligosaccharides to glucose.</text>
</comment>
<comment type="catalytic activity">
    <reaction>
        <text>Hydrolysis of (1-&gt;4)-beta-D-glucosidic linkages in cellulose and cellotetraose, releasing cellobiose from the non-reducing ends of the chains.</text>
        <dbReference type="EC" id="3.2.1.91"/>
    </reaction>
</comment>
<comment type="subcellular location">
    <subcellularLocation>
        <location evidence="5">Secreted</location>
    </subcellularLocation>
</comment>
<comment type="similarity">
    <text evidence="5">Belongs to the glycosyl hydrolase 7 (cellulase C) family.</text>
</comment>
<reference key="1">
    <citation type="journal article" date="2008" name="PLoS Genet.">
        <title>Genomic islands in the pathogenic filamentous fungus Aspergillus fumigatus.</title>
        <authorList>
            <person name="Fedorova N.D."/>
            <person name="Khaldi N."/>
            <person name="Joardar V.S."/>
            <person name="Maiti R."/>
            <person name="Amedeo P."/>
            <person name="Anderson M.J."/>
            <person name="Crabtree J."/>
            <person name="Silva J.C."/>
            <person name="Badger J.H."/>
            <person name="Albarraq A."/>
            <person name="Angiuoli S."/>
            <person name="Bussey H."/>
            <person name="Bowyer P."/>
            <person name="Cotty P.J."/>
            <person name="Dyer P.S."/>
            <person name="Egan A."/>
            <person name="Galens K."/>
            <person name="Fraser-Liggett C.M."/>
            <person name="Haas B.J."/>
            <person name="Inman J.M."/>
            <person name="Kent R."/>
            <person name="Lemieux S."/>
            <person name="Malavazi I."/>
            <person name="Orvis J."/>
            <person name="Roemer T."/>
            <person name="Ronning C.M."/>
            <person name="Sundaram J.P."/>
            <person name="Sutton G."/>
            <person name="Turner G."/>
            <person name="Venter J.C."/>
            <person name="White O.R."/>
            <person name="Whitty B.R."/>
            <person name="Youngman P."/>
            <person name="Wolfe K.H."/>
            <person name="Goldman G.H."/>
            <person name="Wortman J.R."/>
            <person name="Jiang B."/>
            <person name="Denning D.W."/>
            <person name="Nierman W.C."/>
        </authorList>
    </citation>
    <scope>NUCLEOTIDE SEQUENCE [LARGE SCALE GENOMIC DNA]</scope>
    <source>
        <strain>CBS 144.89 / FGSC A1163 / CEA10</strain>
    </source>
</reference>
<keyword id="KW-0119">Carbohydrate metabolism</keyword>
<keyword id="KW-0136">Cellulose degradation</keyword>
<keyword id="KW-1015">Disulfide bond</keyword>
<keyword id="KW-0325">Glycoprotein</keyword>
<keyword id="KW-0326">Glycosidase</keyword>
<keyword id="KW-0378">Hydrolase</keyword>
<keyword id="KW-0624">Polysaccharide degradation</keyword>
<keyword id="KW-0964">Secreted</keyword>
<keyword id="KW-0732">Signal</keyword>
<accession>B0Y8K2</accession>
<feature type="signal peptide" evidence="2">
    <location>
        <begin position="1"/>
        <end position="26"/>
    </location>
</feature>
<feature type="chain" id="PRO_0000393547" description="Probable 1,4-beta-D-glucan cellobiohydrolase B">
    <location>
        <begin position="27"/>
        <end position="532"/>
    </location>
</feature>
<feature type="domain" description="CBM1" evidence="3">
    <location>
        <begin position="496"/>
        <end position="532"/>
    </location>
</feature>
<feature type="region of interest" description="Catalytic">
    <location>
        <begin position="27"/>
        <end position="461"/>
    </location>
</feature>
<feature type="region of interest" description="Thr-rich linker">
    <location>
        <begin position="462"/>
        <end position="496"/>
    </location>
</feature>
<feature type="region of interest" description="Disordered" evidence="4">
    <location>
        <begin position="462"/>
        <end position="495"/>
    </location>
</feature>
<feature type="compositionally biased region" description="Low complexity" evidence="4">
    <location>
        <begin position="475"/>
        <end position="490"/>
    </location>
</feature>
<feature type="active site" description="Nucleophile" evidence="1">
    <location>
        <position position="238"/>
    </location>
</feature>
<feature type="active site" description="Proton donor" evidence="1">
    <location>
        <position position="243"/>
    </location>
</feature>
<feature type="glycosylation site" description="N-linked (GlcNAc...) asparagine" evidence="2">
    <location>
        <position position="296"/>
    </location>
</feature>
<feature type="disulfide bond" evidence="1">
    <location>
        <begin position="504"/>
        <end position="521"/>
    </location>
</feature>
<feature type="disulfide bond" evidence="1">
    <location>
        <begin position="515"/>
        <end position="531"/>
    </location>
</feature>
<evidence type="ECO:0000250" key="1"/>
<evidence type="ECO:0000255" key="2"/>
<evidence type="ECO:0000255" key="3">
    <source>
        <dbReference type="PROSITE-ProRule" id="PRU00597"/>
    </source>
</evidence>
<evidence type="ECO:0000256" key="4">
    <source>
        <dbReference type="SAM" id="MobiDB-lite"/>
    </source>
</evidence>
<evidence type="ECO:0000305" key="5"/>
<gene>
    <name type="primary">cbhB</name>
    <name type="ORF">AFUB_077630</name>
</gene>
<proteinExistence type="inferred from homology"/>
<dbReference type="EC" id="3.2.1.91"/>
<dbReference type="EMBL" id="DS499599">
    <property type="protein sequence ID" value="EDP49733.1"/>
    <property type="molecule type" value="Genomic_DNA"/>
</dbReference>
<dbReference type="SMR" id="B0Y8K2"/>
<dbReference type="GlyCosmos" id="B0Y8K2">
    <property type="glycosylation" value="1 site, No reported glycans"/>
</dbReference>
<dbReference type="EnsemblFungi" id="EDP49733">
    <property type="protein sequence ID" value="EDP49733"/>
    <property type="gene ID" value="AFUB_077630"/>
</dbReference>
<dbReference type="VEuPathDB" id="FungiDB:AFUB_077630"/>
<dbReference type="HOGENOM" id="CLU_020817_3_2_1"/>
<dbReference type="OrthoDB" id="26549at5052"/>
<dbReference type="PhylomeDB" id="B0Y8K2"/>
<dbReference type="Proteomes" id="UP000001699">
    <property type="component" value="Unassembled WGS sequence"/>
</dbReference>
<dbReference type="GO" id="GO:0005576">
    <property type="term" value="C:extracellular region"/>
    <property type="evidence" value="ECO:0007669"/>
    <property type="project" value="UniProtKB-SubCell"/>
</dbReference>
<dbReference type="GO" id="GO:0016162">
    <property type="term" value="F:cellulose 1,4-beta-cellobiosidase activity"/>
    <property type="evidence" value="ECO:0007669"/>
    <property type="project" value="UniProtKB-EC"/>
</dbReference>
<dbReference type="GO" id="GO:0030248">
    <property type="term" value="F:cellulose binding"/>
    <property type="evidence" value="ECO:0007669"/>
    <property type="project" value="InterPro"/>
</dbReference>
<dbReference type="GO" id="GO:0030245">
    <property type="term" value="P:cellulose catabolic process"/>
    <property type="evidence" value="ECO:0007669"/>
    <property type="project" value="UniProtKB-KW"/>
</dbReference>
<dbReference type="CDD" id="cd07999">
    <property type="entry name" value="GH7_CBH_EG"/>
    <property type="match status" value="1"/>
</dbReference>
<dbReference type="FunFam" id="2.70.100.10:FF:000001">
    <property type="entry name" value="Glucanase"/>
    <property type="match status" value="1"/>
</dbReference>
<dbReference type="Gene3D" id="2.70.100.10">
    <property type="entry name" value="Glycoside hydrolase, family 7, domain"/>
    <property type="match status" value="1"/>
</dbReference>
<dbReference type="InterPro" id="IPR035971">
    <property type="entry name" value="CBD_sf"/>
</dbReference>
<dbReference type="InterPro" id="IPR000254">
    <property type="entry name" value="Cellulose-bd_dom_fun"/>
</dbReference>
<dbReference type="InterPro" id="IPR013320">
    <property type="entry name" value="ConA-like_dom_sf"/>
</dbReference>
<dbReference type="InterPro" id="IPR001722">
    <property type="entry name" value="Glyco_hydro_7"/>
</dbReference>
<dbReference type="InterPro" id="IPR037019">
    <property type="entry name" value="Glyco_hydro_7_sf"/>
</dbReference>
<dbReference type="PANTHER" id="PTHR33753">
    <property type="entry name" value="1,4-BETA-D-GLUCAN CELLOBIOHYDROLASE B"/>
    <property type="match status" value="1"/>
</dbReference>
<dbReference type="PANTHER" id="PTHR33753:SF2">
    <property type="entry name" value="GLYCOSIDE HYDROLASE FAMILY 7 PROTEIN"/>
    <property type="match status" value="1"/>
</dbReference>
<dbReference type="Pfam" id="PF00734">
    <property type="entry name" value="CBM_1"/>
    <property type="match status" value="1"/>
</dbReference>
<dbReference type="Pfam" id="PF00840">
    <property type="entry name" value="Glyco_hydro_7"/>
    <property type="match status" value="1"/>
</dbReference>
<dbReference type="PRINTS" id="PR00734">
    <property type="entry name" value="GLHYDRLASE7"/>
</dbReference>
<dbReference type="SMART" id="SM00236">
    <property type="entry name" value="fCBD"/>
    <property type="match status" value="1"/>
</dbReference>
<dbReference type="SUPFAM" id="SSF57180">
    <property type="entry name" value="Cellulose-binding domain"/>
    <property type="match status" value="1"/>
</dbReference>
<dbReference type="SUPFAM" id="SSF49899">
    <property type="entry name" value="Concanavalin A-like lectins/glucanases"/>
    <property type="match status" value="1"/>
</dbReference>
<dbReference type="PROSITE" id="PS00562">
    <property type="entry name" value="CBM1_1"/>
    <property type="match status" value="1"/>
</dbReference>
<dbReference type="PROSITE" id="PS51164">
    <property type="entry name" value="CBM1_2"/>
    <property type="match status" value="1"/>
</dbReference>
<sequence>MLASTFSYRMYKTALILAALLGSGQAQQVGTSQAEVHPSMTWQSCTAGGSCTTNNGKVVIDANWRWVHKVGDYTNCYTGNTWDTTICPDDATCASNCALEGANYESTYGVTASGNSLRLNFVTTSQQKNIGSRLYMMKDDSTYEMFKLLNQEFTFDVDVSNLPCGLNGALYFVAMDADGGMSKYPTNKAGAKYGTGYCDSQCPRDLKFINGQANVEGWQPSSNDANAGTGNHGSCCAEMDIWEANSISTAFTPHPCDTPGQVMCTGDACGGTYSSDRYGGTCDPDGCDFNSFRQGNKTFYGPGMTVDTKSKFTVVTQFITDDGTSSGTLKEIKRFYVQNGKVIPNSESTWTGVSGNSITTEYCTAQKSLFQDQNVFEKHGGLEGMGAALAQGMVLVMSLWDDHSANMLWLDSNYPTTASSTTPGVARGTCDISSGVPADVEANHPDAYVVYSNIKVGPIGSTFNSGGSNPGGGTTTTTTTQPTTTTTTAGNPGGTGVAQHYGQCGGIGWTGPTTCASPYTCQKLNDYYSQCL</sequence>
<protein>
    <recommendedName>
        <fullName>Probable 1,4-beta-D-glucan cellobiohydrolase B</fullName>
        <ecNumber>3.2.1.91</ecNumber>
    </recommendedName>
    <alternativeName>
        <fullName>Beta-glucancellobiohydrolase B</fullName>
    </alternativeName>
    <alternativeName>
        <fullName>Exocellobiohydrolase B</fullName>
    </alternativeName>
    <alternativeName>
        <fullName>Exoglucanase B</fullName>
    </alternativeName>
</protein>